<keyword id="KW-0963">Cytoplasm</keyword>
<keyword id="KW-0413">Isomerase</keyword>
<keyword id="KW-0627">Porphyrin biosynthesis</keyword>
<keyword id="KW-0663">Pyridoxal phosphate</keyword>
<keyword id="KW-1185">Reference proteome</keyword>
<reference key="1">
    <citation type="journal article" date="2009" name="Environ. Microbiol.">
        <title>The genome of Polaromonas naphthalenivorans strain CJ2, isolated from coal tar-contaminated sediment, reveals physiological and metabolic versatility and evolution through extensive horizontal gene transfer.</title>
        <authorList>
            <person name="Yagi J.M."/>
            <person name="Sims D."/>
            <person name="Brettin T."/>
            <person name="Bruce D."/>
            <person name="Madsen E.L."/>
        </authorList>
    </citation>
    <scope>NUCLEOTIDE SEQUENCE [LARGE SCALE GENOMIC DNA]</scope>
    <source>
        <strain>CJ2</strain>
    </source>
</reference>
<gene>
    <name evidence="1" type="primary">hemL</name>
    <name type="ordered locus">Pnap_3357</name>
</gene>
<feature type="chain" id="PRO_0000382355" description="Glutamate-1-semialdehyde 2,1-aminomutase">
    <location>
        <begin position="1"/>
        <end position="442"/>
    </location>
</feature>
<feature type="modified residue" description="N6-(pyridoxal phosphate)lysine" evidence="1">
    <location>
        <position position="282"/>
    </location>
</feature>
<dbReference type="EC" id="5.4.3.8" evidence="1"/>
<dbReference type="EMBL" id="CP000529">
    <property type="protein sequence ID" value="ABM38654.1"/>
    <property type="molecule type" value="Genomic_DNA"/>
</dbReference>
<dbReference type="RefSeq" id="WP_011802725.1">
    <property type="nucleotide sequence ID" value="NC_008781.1"/>
</dbReference>
<dbReference type="SMR" id="A1VSM6"/>
<dbReference type="STRING" id="365044.Pnap_3357"/>
<dbReference type="KEGG" id="pna:Pnap_3357"/>
<dbReference type="eggNOG" id="COG0001">
    <property type="taxonomic scope" value="Bacteria"/>
</dbReference>
<dbReference type="HOGENOM" id="CLU_016922_1_5_4"/>
<dbReference type="OrthoDB" id="3398487at2"/>
<dbReference type="UniPathway" id="UPA00251">
    <property type="reaction ID" value="UER00317"/>
</dbReference>
<dbReference type="Proteomes" id="UP000000644">
    <property type="component" value="Chromosome"/>
</dbReference>
<dbReference type="GO" id="GO:0005737">
    <property type="term" value="C:cytoplasm"/>
    <property type="evidence" value="ECO:0007669"/>
    <property type="project" value="UniProtKB-SubCell"/>
</dbReference>
<dbReference type="GO" id="GO:0042286">
    <property type="term" value="F:glutamate-1-semialdehyde 2,1-aminomutase activity"/>
    <property type="evidence" value="ECO:0007669"/>
    <property type="project" value="UniProtKB-UniRule"/>
</dbReference>
<dbReference type="GO" id="GO:0030170">
    <property type="term" value="F:pyridoxal phosphate binding"/>
    <property type="evidence" value="ECO:0007669"/>
    <property type="project" value="InterPro"/>
</dbReference>
<dbReference type="GO" id="GO:0008483">
    <property type="term" value="F:transaminase activity"/>
    <property type="evidence" value="ECO:0007669"/>
    <property type="project" value="InterPro"/>
</dbReference>
<dbReference type="GO" id="GO:0006782">
    <property type="term" value="P:protoporphyrinogen IX biosynthetic process"/>
    <property type="evidence" value="ECO:0007669"/>
    <property type="project" value="UniProtKB-UniRule"/>
</dbReference>
<dbReference type="CDD" id="cd00610">
    <property type="entry name" value="OAT_like"/>
    <property type="match status" value="1"/>
</dbReference>
<dbReference type="FunFam" id="3.40.640.10:FF:000021">
    <property type="entry name" value="Glutamate-1-semialdehyde 2,1-aminomutase"/>
    <property type="match status" value="1"/>
</dbReference>
<dbReference type="Gene3D" id="3.90.1150.10">
    <property type="entry name" value="Aspartate Aminotransferase, domain 1"/>
    <property type="match status" value="1"/>
</dbReference>
<dbReference type="Gene3D" id="3.40.640.10">
    <property type="entry name" value="Type I PLP-dependent aspartate aminotransferase-like (Major domain)"/>
    <property type="match status" value="1"/>
</dbReference>
<dbReference type="HAMAP" id="MF_00375">
    <property type="entry name" value="HemL_aminotrans_3"/>
    <property type="match status" value="1"/>
</dbReference>
<dbReference type="InterPro" id="IPR004639">
    <property type="entry name" value="4pyrrol_synth_GluAld_NH2Trfase"/>
</dbReference>
<dbReference type="InterPro" id="IPR005814">
    <property type="entry name" value="Aminotrans_3"/>
</dbReference>
<dbReference type="InterPro" id="IPR015424">
    <property type="entry name" value="PyrdxlP-dep_Trfase"/>
</dbReference>
<dbReference type="InterPro" id="IPR015421">
    <property type="entry name" value="PyrdxlP-dep_Trfase_major"/>
</dbReference>
<dbReference type="InterPro" id="IPR015422">
    <property type="entry name" value="PyrdxlP-dep_Trfase_small"/>
</dbReference>
<dbReference type="NCBIfam" id="TIGR00713">
    <property type="entry name" value="hemL"/>
    <property type="match status" value="1"/>
</dbReference>
<dbReference type="NCBIfam" id="NF000818">
    <property type="entry name" value="PRK00062.1"/>
    <property type="match status" value="1"/>
</dbReference>
<dbReference type="PANTHER" id="PTHR43713">
    <property type="entry name" value="GLUTAMATE-1-SEMIALDEHYDE 2,1-AMINOMUTASE"/>
    <property type="match status" value="1"/>
</dbReference>
<dbReference type="PANTHER" id="PTHR43713:SF3">
    <property type="entry name" value="GLUTAMATE-1-SEMIALDEHYDE 2,1-AMINOMUTASE 1, CHLOROPLASTIC-RELATED"/>
    <property type="match status" value="1"/>
</dbReference>
<dbReference type="Pfam" id="PF00202">
    <property type="entry name" value="Aminotran_3"/>
    <property type="match status" value="1"/>
</dbReference>
<dbReference type="SUPFAM" id="SSF53383">
    <property type="entry name" value="PLP-dependent transferases"/>
    <property type="match status" value="1"/>
</dbReference>
<accession>A1VSM6</accession>
<name>GSA_POLNA</name>
<comment type="catalytic activity">
    <reaction evidence="1">
        <text>(S)-4-amino-5-oxopentanoate = 5-aminolevulinate</text>
        <dbReference type="Rhea" id="RHEA:14265"/>
        <dbReference type="ChEBI" id="CHEBI:57501"/>
        <dbReference type="ChEBI" id="CHEBI:356416"/>
        <dbReference type="EC" id="5.4.3.8"/>
    </reaction>
</comment>
<comment type="cofactor">
    <cofactor evidence="1">
        <name>pyridoxal 5'-phosphate</name>
        <dbReference type="ChEBI" id="CHEBI:597326"/>
    </cofactor>
</comment>
<comment type="pathway">
    <text evidence="1">Porphyrin-containing compound metabolism; protoporphyrin-IX biosynthesis; 5-aminolevulinate from L-glutamyl-tRNA(Glu): step 2/2.</text>
</comment>
<comment type="subunit">
    <text evidence="1">Homodimer.</text>
</comment>
<comment type="subcellular location">
    <subcellularLocation>
        <location evidence="1">Cytoplasm</location>
    </subcellularLocation>
</comment>
<comment type="similarity">
    <text evidence="1">Belongs to the class-III pyridoxal-phosphate-dependent aminotransferase family. HemL subfamily.</text>
</comment>
<organism>
    <name type="scientific">Polaromonas naphthalenivorans (strain CJ2)</name>
    <dbReference type="NCBI Taxonomy" id="365044"/>
    <lineage>
        <taxon>Bacteria</taxon>
        <taxon>Pseudomonadati</taxon>
        <taxon>Pseudomonadota</taxon>
        <taxon>Betaproteobacteria</taxon>
        <taxon>Burkholderiales</taxon>
        <taxon>Comamonadaceae</taxon>
        <taxon>Polaromonas</taxon>
    </lineage>
</organism>
<sequence>MEQPNTKPVAPATSRNAALFERAQKLIPGGVNSPVRAFKAVGGTPRFIQRAQGAYFWDADGQRYIDYIGSWGPMILGHGHPAVVEAVQKAVLEGFSYGAPTEREVELAEEIVKLVPSIEMVRLVSSGTEATMSVIRLARGATGRSKIIKFEGCYHGHSDALLVKAGSGLATFGSPTSAGVPPEVVQHTLVLEYNHIAQLEEAFSLHGRDIACLMIEPIAGNMNFVRASVPFIKRCRELCTQYDALLVFDEVMTGFRVALGGAQSVYAQSIPGFKPDITALGKVIGGGMPMAAFGGTRAVMEHLAPLGGVYQAGTLSGNPVATACGLATLREIQKPGFYDALGARTRSLVEGLTHAANQAGVPFCGDSEGGMFGFFLLGTLPQNYPQVMKTDSPTFNRFFHAMLDSGVYYAPALYEAGFVSAAHTAEDIEATVEAATRFFAGR</sequence>
<evidence type="ECO:0000255" key="1">
    <source>
        <dbReference type="HAMAP-Rule" id="MF_00375"/>
    </source>
</evidence>
<proteinExistence type="inferred from homology"/>
<protein>
    <recommendedName>
        <fullName evidence="1">Glutamate-1-semialdehyde 2,1-aminomutase</fullName>
        <shortName evidence="1">GSA</shortName>
        <ecNumber evidence="1">5.4.3.8</ecNumber>
    </recommendedName>
    <alternativeName>
        <fullName evidence="1">Glutamate-1-semialdehyde aminotransferase</fullName>
        <shortName evidence="1">GSA-AT</shortName>
    </alternativeName>
</protein>